<gene>
    <name evidence="1" type="primary">mutS2</name>
    <name evidence="1" type="synonym">rqcU</name>
    <name type="ordered locus">LMOf2365_1241</name>
</gene>
<reference key="1">
    <citation type="journal article" date="2004" name="Nucleic Acids Res.">
        <title>Whole genome comparisons of serotype 4b and 1/2a strains of the food-borne pathogen Listeria monocytogenes reveal new insights into the core genome components of this species.</title>
        <authorList>
            <person name="Nelson K.E."/>
            <person name="Fouts D.E."/>
            <person name="Mongodin E.F."/>
            <person name="Ravel J."/>
            <person name="DeBoy R.T."/>
            <person name="Kolonay J.F."/>
            <person name="Rasko D.A."/>
            <person name="Angiuoli S.V."/>
            <person name="Gill S.R."/>
            <person name="Paulsen I.T."/>
            <person name="Peterson J.D."/>
            <person name="White O."/>
            <person name="Nelson W.C."/>
            <person name="Nierman W.C."/>
            <person name="Beanan M.J."/>
            <person name="Brinkac L.M."/>
            <person name="Daugherty S.C."/>
            <person name="Dodson R.J."/>
            <person name="Durkin A.S."/>
            <person name="Madupu R."/>
            <person name="Haft D.H."/>
            <person name="Selengut J."/>
            <person name="Van Aken S.E."/>
            <person name="Khouri H.M."/>
            <person name="Fedorova N."/>
            <person name="Forberger H.A."/>
            <person name="Tran B."/>
            <person name="Kathariou S."/>
            <person name="Wonderling L.D."/>
            <person name="Uhlich G.A."/>
            <person name="Bayles D.O."/>
            <person name="Luchansky J.B."/>
            <person name="Fraser C.M."/>
        </authorList>
    </citation>
    <scope>NUCLEOTIDE SEQUENCE [LARGE SCALE GENOMIC DNA]</scope>
    <source>
        <strain>F2365</strain>
    </source>
</reference>
<keyword id="KW-0067">ATP-binding</keyword>
<keyword id="KW-0238">DNA-binding</keyword>
<keyword id="KW-0255">Endonuclease</keyword>
<keyword id="KW-0378">Hydrolase</keyword>
<keyword id="KW-0540">Nuclease</keyword>
<keyword id="KW-0547">Nucleotide-binding</keyword>
<keyword id="KW-0694">RNA-binding</keyword>
<keyword id="KW-0699">rRNA-binding</keyword>
<proteinExistence type="inferred from homology"/>
<organism>
    <name type="scientific">Listeria monocytogenes serotype 4b (strain F2365)</name>
    <dbReference type="NCBI Taxonomy" id="265669"/>
    <lineage>
        <taxon>Bacteria</taxon>
        <taxon>Bacillati</taxon>
        <taxon>Bacillota</taxon>
        <taxon>Bacilli</taxon>
        <taxon>Bacillales</taxon>
        <taxon>Listeriaceae</taxon>
        <taxon>Listeria</taxon>
    </lineage>
</organism>
<evidence type="ECO:0000255" key="1">
    <source>
        <dbReference type="HAMAP-Rule" id="MF_00092"/>
    </source>
</evidence>
<protein>
    <recommendedName>
        <fullName evidence="1">Endonuclease MutS2</fullName>
        <ecNumber evidence="1">3.1.-.-</ecNumber>
    </recommendedName>
    <alternativeName>
        <fullName evidence="1">Ribosome-associated protein quality control-upstream factor</fullName>
        <shortName evidence="1">RQC-upstream factor</shortName>
        <shortName evidence="1">RqcU</shortName>
        <ecNumber evidence="1">3.6.4.-</ecNumber>
    </alternativeName>
</protein>
<name>MUTS2_LISMF</name>
<comment type="function">
    <text evidence="1">Endonuclease that is involved in the suppression of homologous recombination and thus may have a key role in the control of bacterial genetic diversity.</text>
</comment>
<comment type="function">
    <text evidence="1">Acts as a ribosome collision sensor, splitting the ribosome into its 2 subunits. Detects stalled/collided 70S ribosomes which it binds and splits by an ATP-hydrolysis driven conformational change. Acts upstream of the ribosome quality control system (RQC), a ribosome-associated complex that mediates the extraction of incompletely synthesized nascent chains from stalled ribosomes and their subsequent degradation. Probably generates substrates for RQC.</text>
</comment>
<comment type="subunit">
    <text evidence="1">Homodimer. Binds to stalled ribosomes, contacting rRNA.</text>
</comment>
<comment type="similarity">
    <text evidence="1">Belongs to the DNA mismatch repair MutS family. MutS2 subfamily.</text>
</comment>
<feature type="chain" id="PRO_0000115225" description="Endonuclease MutS2">
    <location>
        <begin position="1"/>
        <end position="785"/>
    </location>
</feature>
<feature type="domain" description="Smr" evidence="1">
    <location>
        <begin position="710"/>
        <end position="785"/>
    </location>
</feature>
<feature type="binding site" evidence="1">
    <location>
        <begin position="335"/>
        <end position="342"/>
    </location>
    <ligand>
        <name>ATP</name>
        <dbReference type="ChEBI" id="CHEBI:30616"/>
    </ligand>
</feature>
<accession>Q720J7</accession>
<sequence>MEKKVEAILEFDKIKKQLTEFASSSLGEQAILELAPATDFQVVQKTQLETEEGAKIIRLRGSAPITGLTDVFAHLKRLEIGGDLNGLEIYQIGSNLRVSRQMKNFMNDLLEIGVELPLLGALSDELLVLKEVEEDIAISVDESGKVLDTASEALSTIRRTLRRTEDRVREKLESYLRDRNASKMLSDAVITIRNDRYVIPVKQEYKGHYGGIVHDQSASGQTLFIEPQSVVDLNNERKALQAKEKQEIERILAEISASLAAWINEIHHNTFILGRFDFIFAKARFGKAMKAVTPHLSDAGVVHLIAARHPLLDAAKVVANDIYLGEDFTTIVITGPNTGGKTITLKTLGLLTLMAQSGLQIPAQEDSTIAVFEHVFADIGDEQSIEQSLSTFSSHMTNIVSILGNVNQKSLILYDELGAGTDPQEGAALAIAILDASHAKGASVVATTHYPELKAYGYNRVHATNASVEFNVETLSPTYKLLIGVPGRSNAFDISRRLGLSENIITEARSLVDTESADLNDMISSLEEKRNLAETEYEEARELARGAGNLLKDLQKEISNYYQQKDKLIEQASEKAATIVEKAEAEAEEIIHELRTMQLNGAAGIKEHELIDAKTRLGNAKPKTINKTIPQAPKQKPHVFQEGDNVRVLSLGQKGTLLNKISDKEWNVQIGIIKMKIKTVDLEYIQPEKPKKQRIITSVHSSGSPAKSELDLRGERYEDALQKVDKYLDEALLAGYPQVAIIHGKGTGALRTGVTEYLKNHRMVKSIRFGAAAEGGNGVTIVEFK</sequence>
<dbReference type="EC" id="3.1.-.-" evidence="1"/>
<dbReference type="EC" id="3.6.4.-" evidence="1"/>
<dbReference type="EMBL" id="AE017262">
    <property type="protein sequence ID" value="AAT04017.1"/>
    <property type="molecule type" value="Genomic_DNA"/>
</dbReference>
<dbReference type="RefSeq" id="WP_010958871.1">
    <property type="nucleotide sequence ID" value="NC_002973.6"/>
</dbReference>
<dbReference type="SMR" id="Q720J7"/>
<dbReference type="KEGG" id="lmf:LMOf2365_1241"/>
<dbReference type="HOGENOM" id="CLU_011252_2_1_9"/>
<dbReference type="GO" id="GO:0005524">
    <property type="term" value="F:ATP binding"/>
    <property type="evidence" value="ECO:0007669"/>
    <property type="project" value="UniProtKB-UniRule"/>
</dbReference>
<dbReference type="GO" id="GO:0016887">
    <property type="term" value="F:ATP hydrolysis activity"/>
    <property type="evidence" value="ECO:0007669"/>
    <property type="project" value="InterPro"/>
</dbReference>
<dbReference type="GO" id="GO:0140664">
    <property type="term" value="F:ATP-dependent DNA damage sensor activity"/>
    <property type="evidence" value="ECO:0007669"/>
    <property type="project" value="InterPro"/>
</dbReference>
<dbReference type="GO" id="GO:0004519">
    <property type="term" value="F:endonuclease activity"/>
    <property type="evidence" value="ECO:0007669"/>
    <property type="project" value="UniProtKB-UniRule"/>
</dbReference>
<dbReference type="GO" id="GO:0030983">
    <property type="term" value="F:mismatched DNA binding"/>
    <property type="evidence" value="ECO:0007669"/>
    <property type="project" value="InterPro"/>
</dbReference>
<dbReference type="GO" id="GO:0043023">
    <property type="term" value="F:ribosomal large subunit binding"/>
    <property type="evidence" value="ECO:0007669"/>
    <property type="project" value="UniProtKB-UniRule"/>
</dbReference>
<dbReference type="GO" id="GO:0019843">
    <property type="term" value="F:rRNA binding"/>
    <property type="evidence" value="ECO:0007669"/>
    <property type="project" value="UniProtKB-UniRule"/>
</dbReference>
<dbReference type="GO" id="GO:0006298">
    <property type="term" value="P:mismatch repair"/>
    <property type="evidence" value="ECO:0007669"/>
    <property type="project" value="InterPro"/>
</dbReference>
<dbReference type="GO" id="GO:0045910">
    <property type="term" value="P:negative regulation of DNA recombination"/>
    <property type="evidence" value="ECO:0007669"/>
    <property type="project" value="InterPro"/>
</dbReference>
<dbReference type="GO" id="GO:0072344">
    <property type="term" value="P:rescue of stalled ribosome"/>
    <property type="evidence" value="ECO:0007669"/>
    <property type="project" value="UniProtKB-UniRule"/>
</dbReference>
<dbReference type="FunFam" id="3.40.50.300:FF:000830">
    <property type="entry name" value="Endonuclease MutS2"/>
    <property type="match status" value="1"/>
</dbReference>
<dbReference type="Gene3D" id="3.30.1370.110">
    <property type="match status" value="1"/>
</dbReference>
<dbReference type="Gene3D" id="3.40.50.300">
    <property type="entry name" value="P-loop containing nucleotide triphosphate hydrolases"/>
    <property type="match status" value="1"/>
</dbReference>
<dbReference type="HAMAP" id="MF_00092">
    <property type="entry name" value="MutS2"/>
    <property type="match status" value="1"/>
</dbReference>
<dbReference type="InterPro" id="IPR000432">
    <property type="entry name" value="DNA_mismatch_repair_MutS_C"/>
</dbReference>
<dbReference type="InterPro" id="IPR007696">
    <property type="entry name" value="DNA_mismatch_repair_MutS_core"/>
</dbReference>
<dbReference type="InterPro" id="IPR036187">
    <property type="entry name" value="DNA_mismatch_repair_MutS_sf"/>
</dbReference>
<dbReference type="InterPro" id="IPR046893">
    <property type="entry name" value="MSSS"/>
</dbReference>
<dbReference type="InterPro" id="IPR045076">
    <property type="entry name" value="MutS"/>
</dbReference>
<dbReference type="InterPro" id="IPR005747">
    <property type="entry name" value="MutS2"/>
</dbReference>
<dbReference type="InterPro" id="IPR027417">
    <property type="entry name" value="P-loop_NTPase"/>
</dbReference>
<dbReference type="InterPro" id="IPR002625">
    <property type="entry name" value="Smr_dom"/>
</dbReference>
<dbReference type="InterPro" id="IPR036063">
    <property type="entry name" value="Smr_dom_sf"/>
</dbReference>
<dbReference type="NCBIfam" id="TIGR01069">
    <property type="entry name" value="mutS2"/>
    <property type="match status" value="1"/>
</dbReference>
<dbReference type="PANTHER" id="PTHR48466:SF2">
    <property type="entry name" value="OS10G0509000 PROTEIN"/>
    <property type="match status" value="1"/>
</dbReference>
<dbReference type="PANTHER" id="PTHR48466">
    <property type="entry name" value="OS10G0509000 PROTEIN-RELATED"/>
    <property type="match status" value="1"/>
</dbReference>
<dbReference type="Pfam" id="PF20297">
    <property type="entry name" value="MSSS"/>
    <property type="match status" value="1"/>
</dbReference>
<dbReference type="Pfam" id="PF00488">
    <property type="entry name" value="MutS_V"/>
    <property type="match status" value="1"/>
</dbReference>
<dbReference type="Pfam" id="PF01713">
    <property type="entry name" value="Smr"/>
    <property type="match status" value="1"/>
</dbReference>
<dbReference type="PIRSF" id="PIRSF005814">
    <property type="entry name" value="MutS_YshD"/>
    <property type="match status" value="1"/>
</dbReference>
<dbReference type="SMART" id="SM00534">
    <property type="entry name" value="MUTSac"/>
    <property type="match status" value="1"/>
</dbReference>
<dbReference type="SMART" id="SM00533">
    <property type="entry name" value="MUTSd"/>
    <property type="match status" value="1"/>
</dbReference>
<dbReference type="SMART" id="SM00463">
    <property type="entry name" value="SMR"/>
    <property type="match status" value="1"/>
</dbReference>
<dbReference type="SUPFAM" id="SSF48334">
    <property type="entry name" value="DNA repair protein MutS, domain III"/>
    <property type="match status" value="1"/>
</dbReference>
<dbReference type="SUPFAM" id="SSF52540">
    <property type="entry name" value="P-loop containing nucleoside triphosphate hydrolases"/>
    <property type="match status" value="1"/>
</dbReference>
<dbReference type="SUPFAM" id="SSF160443">
    <property type="entry name" value="SMR domain-like"/>
    <property type="match status" value="1"/>
</dbReference>
<dbReference type="PROSITE" id="PS00486">
    <property type="entry name" value="DNA_MISMATCH_REPAIR_2"/>
    <property type="match status" value="1"/>
</dbReference>
<dbReference type="PROSITE" id="PS50828">
    <property type="entry name" value="SMR"/>
    <property type="match status" value="1"/>
</dbReference>